<keyword id="KW-0489">Methyltransferase</keyword>
<keyword id="KW-0949">S-adenosyl-L-methionine</keyword>
<keyword id="KW-0808">Transferase</keyword>
<keyword id="KW-0819">tRNA processing</keyword>
<comment type="function">
    <text evidence="2">Catalyzes the formation of N(7)-methylguanine at position 46 (m7G46) in tRNA.</text>
</comment>
<comment type="catalytic activity">
    <reaction evidence="2">
        <text>guanosine(46) in tRNA + S-adenosyl-L-methionine = N(7)-methylguanosine(46) in tRNA + S-adenosyl-L-homocysteine</text>
        <dbReference type="Rhea" id="RHEA:42708"/>
        <dbReference type="Rhea" id="RHEA-COMP:10188"/>
        <dbReference type="Rhea" id="RHEA-COMP:10189"/>
        <dbReference type="ChEBI" id="CHEBI:57856"/>
        <dbReference type="ChEBI" id="CHEBI:59789"/>
        <dbReference type="ChEBI" id="CHEBI:74269"/>
        <dbReference type="ChEBI" id="CHEBI:74480"/>
        <dbReference type="EC" id="2.1.1.33"/>
    </reaction>
</comment>
<comment type="pathway">
    <text evidence="2">tRNA modification; N(7)-methylguanine-tRNA biosynthesis.</text>
</comment>
<comment type="similarity">
    <text evidence="2">Belongs to the class I-like SAM-binding methyltransferase superfamily. TrmB family.</text>
</comment>
<feature type="chain" id="PRO_1000064397" description="tRNA (guanine-N(7)-)-methyltransferase">
    <location>
        <begin position="1"/>
        <end position="246"/>
    </location>
</feature>
<feature type="active site" evidence="1">
    <location>
        <position position="152"/>
    </location>
</feature>
<feature type="binding site" evidence="2">
    <location>
        <position position="77"/>
    </location>
    <ligand>
        <name>S-adenosyl-L-methionine</name>
        <dbReference type="ChEBI" id="CHEBI:59789"/>
    </ligand>
</feature>
<feature type="binding site" evidence="2">
    <location>
        <position position="102"/>
    </location>
    <ligand>
        <name>S-adenosyl-L-methionine</name>
        <dbReference type="ChEBI" id="CHEBI:59789"/>
    </ligand>
</feature>
<feature type="binding site" evidence="2">
    <location>
        <position position="129"/>
    </location>
    <ligand>
        <name>S-adenosyl-L-methionine</name>
        <dbReference type="ChEBI" id="CHEBI:59789"/>
    </ligand>
</feature>
<feature type="binding site" evidence="2">
    <location>
        <position position="152"/>
    </location>
    <ligand>
        <name>S-adenosyl-L-methionine</name>
        <dbReference type="ChEBI" id="CHEBI:59789"/>
    </ligand>
</feature>
<feature type="binding site" evidence="2">
    <location>
        <position position="156"/>
    </location>
    <ligand>
        <name>substrate</name>
    </ligand>
</feature>
<feature type="binding site" evidence="2">
    <location>
        <position position="188"/>
    </location>
    <ligand>
        <name>substrate</name>
    </ligand>
</feature>
<feature type="binding site" evidence="2">
    <location>
        <begin position="225"/>
        <end position="228"/>
    </location>
    <ligand>
        <name>substrate</name>
    </ligand>
</feature>
<gene>
    <name evidence="2" type="primary">trmB</name>
    <name type="ordered locus">CGSHiGG_04505</name>
</gene>
<evidence type="ECO:0000250" key="1"/>
<evidence type="ECO:0000255" key="2">
    <source>
        <dbReference type="HAMAP-Rule" id="MF_01057"/>
    </source>
</evidence>
<dbReference type="EC" id="2.1.1.33" evidence="2"/>
<dbReference type="EMBL" id="CP000672">
    <property type="protein sequence ID" value="ABQ99855.1"/>
    <property type="molecule type" value="Genomic_DNA"/>
</dbReference>
<dbReference type="SMR" id="A5UGF0"/>
<dbReference type="KEGG" id="hiq:CGSHiGG_04505"/>
<dbReference type="HOGENOM" id="CLU_050910_0_1_6"/>
<dbReference type="UniPathway" id="UPA00989"/>
<dbReference type="Proteomes" id="UP000001990">
    <property type="component" value="Chromosome"/>
</dbReference>
<dbReference type="GO" id="GO:0043527">
    <property type="term" value="C:tRNA methyltransferase complex"/>
    <property type="evidence" value="ECO:0007669"/>
    <property type="project" value="TreeGrafter"/>
</dbReference>
<dbReference type="GO" id="GO:0008176">
    <property type="term" value="F:tRNA (guanine(46)-N7)-methyltransferase activity"/>
    <property type="evidence" value="ECO:0007669"/>
    <property type="project" value="UniProtKB-UniRule"/>
</dbReference>
<dbReference type="FunFam" id="3.40.50.150:FF:000024">
    <property type="entry name" value="tRNA (guanine-N(7)-)-methyltransferase"/>
    <property type="match status" value="1"/>
</dbReference>
<dbReference type="Gene3D" id="3.40.50.150">
    <property type="entry name" value="Vaccinia Virus protein VP39"/>
    <property type="match status" value="1"/>
</dbReference>
<dbReference type="HAMAP" id="MF_01057">
    <property type="entry name" value="tRNA_methyltr_TrmB"/>
    <property type="match status" value="1"/>
</dbReference>
<dbReference type="InterPro" id="IPR029063">
    <property type="entry name" value="SAM-dependent_MTases_sf"/>
</dbReference>
<dbReference type="InterPro" id="IPR003358">
    <property type="entry name" value="tRNA_(Gua-N-7)_MeTrfase_Trmb"/>
</dbReference>
<dbReference type="InterPro" id="IPR055361">
    <property type="entry name" value="tRNA_methyltr_TrmB_bact"/>
</dbReference>
<dbReference type="NCBIfam" id="TIGR00091">
    <property type="entry name" value="tRNA (guanosine(46)-N7)-methyltransferase TrmB"/>
    <property type="match status" value="1"/>
</dbReference>
<dbReference type="PANTHER" id="PTHR23417">
    <property type="entry name" value="3-DEOXY-D-MANNO-OCTULOSONIC-ACID TRANSFERASE/TRNA GUANINE-N 7 - -METHYLTRANSFERASE"/>
    <property type="match status" value="1"/>
</dbReference>
<dbReference type="PANTHER" id="PTHR23417:SF14">
    <property type="entry name" value="PENTACOTRIPEPTIDE-REPEAT REGION OF PRORP DOMAIN-CONTAINING PROTEIN"/>
    <property type="match status" value="1"/>
</dbReference>
<dbReference type="Pfam" id="PF02390">
    <property type="entry name" value="Methyltransf_4"/>
    <property type="match status" value="1"/>
</dbReference>
<dbReference type="SUPFAM" id="SSF53335">
    <property type="entry name" value="S-adenosyl-L-methionine-dependent methyltransferases"/>
    <property type="match status" value="1"/>
</dbReference>
<dbReference type="PROSITE" id="PS51625">
    <property type="entry name" value="SAM_MT_TRMB"/>
    <property type="match status" value="1"/>
</dbReference>
<organism>
    <name type="scientific">Haemophilus influenzae (strain PittGG)</name>
    <dbReference type="NCBI Taxonomy" id="374931"/>
    <lineage>
        <taxon>Bacteria</taxon>
        <taxon>Pseudomonadati</taxon>
        <taxon>Pseudomonadota</taxon>
        <taxon>Gammaproteobacteria</taxon>
        <taxon>Pasteurellales</taxon>
        <taxon>Pasteurellaceae</taxon>
        <taxon>Haemophilus</taxon>
    </lineage>
</organism>
<reference key="1">
    <citation type="journal article" date="2007" name="Genome Biol.">
        <title>Characterization and modeling of the Haemophilus influenzae core and supragenomes based on the complete genomic sequences of Rd and 12 clinical nontypeable strains.</title>
        <authorList>
            <person name="Hogg J.S."/>
            <person name="Hu F.Z."/>
            <person name="Janto B."/>
            <person name="Boissy R."/>
            <person name="Hayes J."/>
            <person name="Keefe R."/>
            <person name="Post J.C."/>
            <person name="Ehrlich G.D."/>
        </authorList>
    </citation>
    <scope>NUCLEOTIDE SEQUENCE [LARGE SCALE GENOMIC DNA]</scope>
    <source>
        <strain>PittGG</strain>
    </source>
</reference>
<protein>
    <recommendedName>
        <fullName evidence="2">tRNA (guanine-N(7)-)-methyltransferase</fullName>
        <ecNumber evidence="2">2.1.1.33</ecNumber>
    </recommendedName>
    <alternativeName>
        <fullName evidence="2">tRNA (guanine(46)-N(7))-methyltransferase</fullName>
    </alternativeName>
    <alternativeName>
        <fullName evidence="2">tRNA(m7G46)-methyltransferase</fullName>
    </alternativeName>
</protein>
<sequence length="246" mass="28086">MTQTFADQKRKTVETAEFTEDGRYKRKVRSFVLRTGRLSEFQRNMMNDNWGTLGLDYQTEPFDFAKIYGNDNPVVLEIGFGMGKSLVDMAFANPDKNYLGIEVHTPGVGACIAYAVEKGVTNLRVICHDATEILRDSIADGTLGGLQLFFPDPWHKAKHHKRRIVQPHFVTQVIQKLSENGFIHMATDWENYAEQMLEVLSANTDLVNTSKNGNYIPRPDFRPLTKFEARGHKLGHGVWDLYFVKK</sequence>
<name>TRMB_HAEIG</name>
<proteinExistence type="inferred from homology"/>
<accession>A5UGF0</accession>